<accession>P15042</accession>
<accession>P78197</accession>
<accession>P78198</accession>
<organism>
    <name type="scientific">Escherichia coli (strain K12)</name>
    <dbReference type="NCBI Taxonomy" id="83333"/>
    <lineage>
        <taxon>Bacteria</taxon>
        <taxon>Pseudomonadati</taxon>
        <taxon>Pseudomonadota</taxon>
        <taxon>Gammaproteobacteria</taxon>
        <taxon>Enterobacterales</taxon>
        <taxon>Enterobacteriaceae</taxon>
        <taxon>Escherichia</taxon>
    </lineage>
</organism>
<keyword id="KW-0002">3D-structure</keyword>
<keyword id="KW-0903">Direct protein sequencing</keyword>
<keyword id="KW-0227">DNA damage</keyword>
<keyword id="KW-0234">DNA repair</keyword>
<keyword id="KW-0235">DNA replication</keyword>
<keyword id="KW-0436">Ligase</keyword>
<keyword id="KW-0460">Magnesium</keyword>
<keyword id="KW-0479">Metal-binding</keyword>
<keyword id="KW-0520">NAD</keyword>
<keyword id="KW-1185">Reference proteome</keyword>
<keyword id="KW-0862">Zinc</keyword>
<gene>
    <name type="primary">ligA</name>
    <name type="synonym">dnaL</name>
    <name type="synonym">lig</name>
    <name type="synonym">lop</name>
    <name type="synonym">pdeC</name>
    <name type="ordered locus">b2411</name>
    <name type="ordered locus">JW2403</name>
</gene>
<reference key="1">
    <citation type="journal article" date="1986" name="Mol. Gen. Genet.">
        <title>Nucleotide sequence of the lig gene and primary structure of DNA ligase of Escherichia coli.</title>
        <authorList>
            <person name="Ishino Y."/>
            <person name="Shinagawa H."/>
            <person name="Makino K."/>
            <person name="Tsunasawa S."/>
            <person name="Sakiyama F."/>
            <person name="Nakata A."/>
        </authorList>
    </citation>
    <scope>NUCLEOTIDE SEQUENCE [GENOMIC DNA]</scope>
    <scope>PROTEIN SEQUENCE OF 1-13 AND 666-671</scope>
    <source>
        <strain>K12 / C600 / CR34 / ATCC 23724 / DSM 3925 / LMG 3041 / NCIB 10222</strain>
    </source>
</reference>
<reference key="2">
    <citation type="submission" date="1989-04" db="EMBL/GenBank/DDBJ databases">
        <authorList>
            <person name="O'Connor M.J."/>
            <person name="Ally A."/>
            <person name="Ally D."/>
            <person name="Zhang X."/>
            <person name="Robichaud M."/>
            <person name="Backman K."/>
        </authorList>
    </citation>
    <scope>NUCLEOTIDE SEQUENCE [GENOMIC DNA]</scope>
</reference>
<reference key="3">
    <citation type="journal article" date="1997" name="DNA Res.">
        <title>Construction of a contiguous 874-kb sequence of the Escherichia coli-K12 genome corresponding to 50.0-68.8 min on the linkage map and analysis of its sequence features.</title>
        <authorList>
            <person name="Yamamoto Y."/>
            <person name="Aiba H."/>
            <person name="Baba T."/>
            <person name="Hayashi K."/>
            <person name="Inada T."/>
            <person name="Isono K."/>
            <person name="Itoh T."/>
            <person name="Kimura S."/>
            <person name="Kitagawa M."/>
            <person name="Makino K."/>
            <person name="Miki T."/>
            <person name="Mitsuhashi N."/>
            <person name="Mizobuchi K."/>
            <person name="Mori H."/>
            <person name="Nakade S."/>
            <person name="Nakamura Y."/>
            <person name="Nashimoto H."/>
            <person name="Oshima T."/>
            <person name="Oyama S."/>
            <person name="Saito N."/>
            <person name="Sampei G."/>
            <person name="Satoh Y."/>
            <person name="Sivasundaram S."/>
            <person name="Tagami H."/>
            <person name="Takahashi H."/>
            <person name="Takeda J."/>
            <person name="Takemoto K."/>
            <person name="Uehara K."/>
            <person name="Wada C."/>
            <person name="Yamagata S."/>
            <person name="Horiuchi T."/>
        </authorList>
    </citation>
    <scope>NUCLEOTIDE SEQUENCE [LARGE SCALE GENOMIC DNA]</scope>
    <source>
        <strain>K12 / W3110 / ATCC 27325 / DSM 5911</strain>
    </source>
</reference>
<reference key="4">
    <citation type="journal article" date="1997" name="Science">
        <title>The complete genome sequence of Escherichia coli K-12.</title>
        <authorList>
            <person name="Blattner F.R."/>
            <person name="Plunkett G. III"/>
            <person name="Bloch C.A."/>
            <person name="Perna N.T."/>
            <person name="Burland V."/>
            <person name="Riley M."/>
            <person name="Collado-Vides J."/>
            <person name="Glasner J.D."/>
            <person name="Rode C.K."/>
            <person name="Mayhew G.F."/>
            <person name="Gregor J."/>
            <person name="Davis N.W."/>
            <person name="Kirkpatrick H.A."/>
            <person name="Goeden M.A."/>
            <person name="Rose D.J."/>
            <person name="Mau B."/>
            <person name="Shao Y."/>
        </authorList>
    </citation>
    <scope>NUCLEOTIDE SEQUENCE [LARGE SCALE GENOMIC DNA]</scope>
    <source>
        <strain>K12 / MG1655 / ATCC 47076</strain>
    </source>
</reference>
<reference key="5">
    <citation type="journal article" date="2006" name="Mol. Syst. Biol.">
        <title>Highly accurate genome sequences of Escherichia coli K-12 strains MG1655 and W3110.</title>
        <authorList>
            <person name="Hayashi K."/>
            <person name="Morooka N."/>
            <person name="Yamamoto Y."/>
            <person name="Fujita K."/>
            <person name="Isono K."/>
            <person name="Choi S."/>
            <person name="Ohtsubo E."/>
            <person name="Baba T."/>
            <person name="Wanner B.L."/>
            <person name="Mori H."/>
            <person name="Horiuchi T."/>
        </authorList>
    </citation>
    <scope>NUCLEOTIDE SEQUENCE [LARGE SCALE GENOMIC DNA]</scope>
    <scope>SEQUENCE REVISION</scope>
    <source>
        <strain>K12 / W3110 / ATCC 27325 / DSM 5911</strain>
    </source>
</reference>
<reference key="6">
    <citation type="journal article" date="1997" name="Cell">
        <title>Direct binding of FtsZ to ZipA, an essential component of the septal ring structure that mediates cell division in E. coli.</title>
        <authorList>
            <person name="Hale C.A."/>
            <person name="de Boer P.A.J."/>
        </authorList>
    </citation>
    <scope>NUCLEOTIDE SEQUENCE [GENOMIC DNA] OF 1-90</scope>
    <source>
        <strain>PB103</strain>
    </source>
</reference>
<reference key="7">
    <citation type="journal article" date="2002" name="J. Biol. Chem.">
        <title>Conserved residues in domain Ia are required for the reaction of Escherichia coli DNA ligase with NAD+.</title>
        <authorList>
            <person name="Sriskanda V."/>
            <person name="Shuman S."/>
        </authorList>
    </citation>
    <scope>CATALYTIC ACTIVITY</scope>
    <scope>COFACTOR</scope>
    <scope>MUTAGENESIS OF GLU-10; TYR-22; HIS-23; ASP-32; TYR-35 AND ASP-36</scope>
    <scope>ACTIVE SITE</scope>
</reference>
<reference key="8">
    <citation type="journal article" date="2005" name="J. Biol. Chem.">
        <title>Structure-guided mutational analysis of the nucleotidyltransferase domain of Escherichia coli NAD+-dependent DNA ligase (LigA).</title>
        <authorList>
            <person name="Zhu H."/>
            <person name="Shuman S."/>
        </authorList>
    </citation>
    <scope>MUTAGENESIS OF LYS-115; ASP-117; GLY-118; ASP-138; GLU-143; GLY-172; GLU-173; ASN-198; ARG-200; ARG-208; ARG-277; ASP-285; GLY-286; VAL-288; LYS-290 AND LYS-314</scope>
</reference>
<reference key="9">
    <citation type="journal article" date="2008" name="J. Biol. Chem.">
        <title>Structure-guided mutational analysis of the OB, HhH, and BRCT domains of Escherichia coli DNA ligase.</title>
        <authorList>
            <person name="Wang L.K."/>
            <person name="Nair P.A."/>
            <person name="Shuman S."/>
        </authorList>
    </citation>
    <scope>MUTAGENESIS OF ARG-333; THR-334; ARG-342; ARG-379; 383-VAL-ILE-384; 446-ARG-ARG-447; GLY-455; ARG-487; GLY-489; GLY-521; GLY-553 AND ARG-614</scope>
</reference>
<reference key="10">
    <citation type="journal article" date="2007" name="Mol. Cell">
        <title>Last stop on the road to repair: structure of E. coli DNA ligase bound to nicked DNA-adenylate.</title>
        <authorList>
            <person name="Nandakumar J."/>
            <person name="Nair P.A."/>
            <person name="Shuman S."/>
        </authorList>
    </citation>
    <scope>X-RAY CRYSTALLOGRAPHY (2.3 ANGSTROMS) IN COMPLEX WITH ZINC IONS; AMP AND DNA</scope>
</reference>
<comment type="function">
    <text>DNA ligase that catalyzes the formation of phosphodiester linkages between 5'-phosphoryl and 3'-hydroxyl groups in double-stranded DNA using NAD as a coenzyme and as the energy source for the reaction. It is essential for DNA replication and repair of damaged DNA.</text>
</comment>
<comment type="catalytic activity">
    <reaction evidence="2">
        <text>NAD(+) + (deoxyribonucleotide)n-3'-hydroxyl + 5'-phospho-(deoxyribonucleotide)m = (deoxyribonucleotide)n+m + AMP + beta-nicotinamide D-nucleotide.</text>
        <dbReference type="EC" id="6.5.1.2"/>
    </reaction>
</comment>
<comment type="cofactor">
    <cofactor evidence="2">
        <name>Mg(2+)</name>
        <dbReference type="ChEBI" id="CHEBI:18420"/>
    </cofactor>
</comment>
<comment type="interaction">
    <interactant intactId="EBI-553496">
        <id>P15042</id>
    </interactant>
    <interactant intactId="EBI-553345">
        <id>P07813</id>
        <label>leuS</label>
    </interactant>
    <organismsDiffer>false</organismsDiffer>
    <experiments>3</experiments>
</comment>
<comment type="similarity">
    <text evidence="6">Belongs to the NAD-dependent DNA ligase family. LigA subfamily.</text>
</comment>
<evidence type="ECO:0000255" key="1">
    <source>
        <dbReference type="HAMAP-Rule" id="MF_01588"/>
    </source>
</evidence>
<evidence type="ECO:0000269" key="2">
    <source>
    </source>
</evidence>
<evidence type="ECO:0000269" key="3">
    <source>
    </source>
</evidence>
<evidence type="ECO:0000269" key="4">
    <source>
    </source>
</evidence>
<evidence type="ECO:0000269" key="5">
    <source>
    </source>
</evidence>
<evidence type="ECO:0000305" key="6"/>
<evidence type="ECO:0000305" key="7">
    <source>
    </source>
</evidence>
<evidence type="ECO:0007829" key="8">
    <source>
        <dbReference type="PDB" id="2OWO"/>
    </source>
</evidence>
<evidence type="ECO:0007829" key="9">
    <source>
        <dbReference type="PDB" id="4GLX"/>
    </source>
</evidence>
<evidence type="ECO:0007829" key="10">
    <source>
        <dbReference type="PDB" id="5TT5"/>
    </source>
</evidence>
<proteinExistence type="evidence at protein level"/>
<name>DNLJ_ECOLI</name>
<protein>
    <recommendedName>
        <fullName>DNA ligase</fullName>
        <ecNumber>6.5.1.2</ecNumber>
    </recommendedName>
    <alternativeName>
        <fullName>Polydeoxyribonucleotide synthase [NAD(+)]</fullName>
    </alternativeName>
</protein>
<feature type="chain" id="PRO_0000161745" description="DNA ligase">
    <location>
        <begin position="1"/>
        <end position="671"/>
    </location>
</feature>
<feature type="domain" description="BRCT">
    <location>
        <begin position="593"/>
        <end position="671"/>
    </location>
</feature>
<feature type="region of interest" description="Interaction with target DNA" evidence="7">
    <location>
        <begin position="330"/>
        <end position="334"/>
    </location>
</feature>
<feature type="region of interest" description="Interaction with target DNA" evidence="7">
    <location>
        <begin position="453"/>
        <end position="458"/>
    </location>
</feature>
<feature type="region of interest" description="Interaction with target DNA" evidence="7">
    <location>
        <begin position="519"/>
        <end position="524"/>
    </location>
</feature>
<feature type="region of interest" description="Interaction with target DNA" evidence="7">
    <location>
        <begin position="551"/>
        <end position="556"/>
    </location>
</feature>
<feature type="active site" description="N6-AMP-lysine intermediate" evidence="1 2">
    <location>
        <position position="115"/>
    </location>
</feature>
<feature type="binding site" evidence="1">
    <location>
        <begin position="32"/>
        <end position="36"/>
    </location>
    <ligand>
        <name>NAD(+)</name>
        <dbReference type="ChEBI" id="CHEBI:57540"/>
    </ligand>
</feature>
<feature type="binding site" evidence="1 7">
    <location>
        <begin position="81"/>
        <end position="82"/>
    </location>
    <ligand>
        <name>NAD(+)</name>
        <dbReference type="ChEBI" id="CHEBI:57540"/>
    </ligand>
</feature>
<feature type="binding site" evidence="1 7">
    <location>
        <position position="113"/>
    </location>
    <ligand>
        <name>NAD(+)</name>
        <dbReference type="ChEBI" id="CHEBI:57540"/>
    </ligand>
</feature>
<feature type="binding site" evidence="1 7">
    <location>
        <position position="136"/>
    </location>
    <ligand>
        <name>NAD(+)</name>
        <dbReference type="ChEBI" id="CHEBI:57540"/>
    </ligand>
</feature>
<feature type="binding site" evidence="1">
    <location>
        <position position="173"/>
    </location>
    <ligand>
        <name>NAD(+)</name>
        <dbReference type="ChEBI" id="CHEBI:57540"/>
    </ligand>
</feature>
<feature type="binding site" evidence="1 7">
    <location>
        <position position="290"/>
    </location>
    <ligand>
        <name>NAD(+)</name>
        <dbReference type="ChEBI" id="CHEBI:57540"/>
    </ligand>
</feature>
<feature type="binding site" evidence="1">
    <location>
        <position position="314"/>
    </location>
    <ligand>
        <name>NAD(+)</name>
        <dbReference type="ChEBI" id="CHEBI:57540"/>
    </ligand>
</feature>
<feature type="binding site" evidence="1 4">
    <location>
        <position position="408"/>
    </location>
    <ligand>
        <name>Zn(2+)</name>
        <dbReference type="ChEBI" id="CHEBI:29105"/>
    </ligand>
</feature>
<feature type="binding site" evidence="1 4">
    <location>
        <position position="411"/>
    </location>
    <ligand>
        <name>Zn(2+)</name>
        <dbReference type="ChEBI" id="CHEBI:29105"/>
    </ligand>
</feature>
<feature type="binding site" evidence="1 4">
    <location>
        <position position="426"/>
    </location>
    <ligand>
        <name>Zn(2+)</name>
        <dbReference type="ChEBI" id="CHEBI:29105"/>
    </ligand>
</feature>
<feature type="binding site" evidence="1 4">
    <location>
        <position position="432"/>
    </location>
    <ligand>
        <name>Zn(2+)</name>
        <dbReference type="ChEBI" id="CHEBI:29105"/>
    </ligand>
</feature>
<feature type="site" description="Interaction with target DNA" evidence="7">
    <location>
        <position position="487"/>
    </location>
</feature>
<feature type="site" description="Interaction with target DNA" evidence="7">
    <location>
        <position position="492"/>
    </location>
</feature>
<feature type="mutagenesis site" description="No effect." evidence="2">
    <original>E</original>
    <variation>A</variation>
    <location>
        <position position="10"/>
    </location>
</feature>
<feature type="mutagenesis site" description="Reduces nick joining activity by 99.9%." evidence="2">
    <original>Y</original>
    <variation>A</variation>
    <variation>S</variation>
    <location>
        <position position="22"/>
    </location>
</feature>
<feature type="mutagenesis site" description="Reduces nick joining activity by 91%." evidence="2">
    <original>Y</original>
    <variation>F</variation>
    <location>
        <position position="22"/>
    </location>
</feature>
<feature type="mutagenesis site" description="Reduces nick joining activity by 90%." evidence="2">
    <original>H</original>
    <variation>A</variation>
    <variation>Y</variation>
    <location>
        <position position="23"/>
    </location>
</feature>
<feature type="mutagenesis site" description="Reduces nick joining activity by 99%." evidence="2">
    <original>D</original>
    <variation>A</variation>
    <variation>E</variation>
    <location>
        <position position="32"/>
    </location>
</feature>
<feature type="mutagenesis site" description="Reduces nick joining activity by 91%." evidence="2">
    <original>D</original>
    <variation>N</variation>
    <location>
        <position position="32"/>
    </location>
</feature>
<feature type="mutagenesis site" description="Reduces nick joining activity by 98%." evidence="2">
    <original>Y</original>
    <variation>A</variation>
    <location>
        <position position="35"/>
    </location>
</feature>
<feature type="mutagenesis site" description="Reduces nick joining activity by 77%." evidence="2">
    <original>Y</original>
    <variation>F</variation>
    <location>
        <position position="35"/>
    </location>
</feature>
<feature type="mutagenesis site" description="Reduces nick joining activity by 99.9%." evidence="2">
    <original>Y</original>
    <variation>S</variation>
    <location>
        <position position="35"/>
    </location>
</feature>
<feature type="mutagenesis site" description="Reduces nick joining activity by 99.8%." evidence="2">
    <original>D</original>
    <variation>A</variation>
    <location>
        <position position="36"/>
    </location>
</feature>
<feature type="mutagenesis site" description="Reduces nick joining activity by 96%." evidence="2">
    <original>D</original>
    <variation>E</variation>
    <location>
        <position position="36"/>
    </location>
</feature>
<feature type="mutagenesis site" description="Reduces nick joining activity by 88%." evidence="2">
    <original>D</original>
    <variation>N</variation>
    <location>
        <position position="36"/>
    </location>
</feature>
<feature type="mutagenesis site" description="Reduces nick joining activity by 99.9%." evidence="3">
    <original>K</original>
    <variation>Q</variation>
    <variation>R</variation>
    <location>
        <position position="115"/>
    </location>
</feature>
<feature type="mutagenesis site" description="Reduces nick joining activity by 97%." evidence="3">
    <original>D</original>
    <variation>E</variation>
    <location>
        <position position="117"/>
    </location>
</feature>
<feature type="mutagenesis site" description="Reduces nick joining activity by 99.9%." evidence="3">
    <original>D</original>
    <variation>N</variation>
    <location>
        <position position="117"/>
    </location>
</feature>
<feature type="mutagenesis site" description="Reduces nick joining activity by 99.9%." evidence="3">
    <original>G</original>
    <variation>A</variation>
    <location>
        <position position="118"/>
    </location>
</feature>
<feature type="mutagenesis site" description="Reduces nick joining activity by 63%." evidence="3">
    <original>D</original>
    <variation>A</variation>
    <location>
        <position position="138"/>
    </location>
</feature>
<feature type="mutagenesis site" description="Reduces nick joining activity by 48%." evidence="3">
    <original>E</original>
    <variation>A</variation>
    <location>
        <position position="143"/>
    </location>
</feature>
<feature type="mutagenesis site" description="Reduces nick joining activity by 64%." evidence="3">
    <original>G</original>
    <variation>A</variation>
    <location>
        <position position="172"/>
    </location>
</feature>
<feature type="mutagenesis site" description="Reduces nick joining activity by 99.9%." evidence="3">
    <original>E</original>
    <variation>A</variation>
    <variation>D</variation>
    <variation>Q</variation>
    <location>
        <position position="173"/>
    </location>
</feature>
<feature type="mutagenesis site" description="Reduces nick joining activity by 74%." evidence="3">
    <original>N</original>
    <variation>A</variation>
    <location>
        <position position="198"/>
    </location>
</feature>
<feature type="mutagenesis site" description="Reduces nick joining activity by 99.9%." evidence="3">
    <original>R</original>
    <variation>A</variation>
    <variation>K</variation>
    <variation>Q</variation>
    <location>
        <position position="200"/>
    </location>
</feature>
<feature type="mutagenesis site" description="Reduces nick joining activity by 99%." evidence="3">
    <original>R</original>
    <variation>A</variation>
    <variation>K</variation>
    <variation>Q</variation>
    <location>
        <position position="208"/>
    </location>
</feature>
<feature type="mutagenesis site" description="Reduces nick joining activity by 99%." evidence="3">
    <original>R</original>
    <variation>A</variation>
    <location>
        <position position="277"/>
    </location>
</feature>
<feature type="mutagenesis site" description="Reduces nick joining activity by 96%." evidence="3">
    <original>D</original>
    <variation>E</variation>
    <location>
        <position position="285"/>
    </location>
</feature>
<feature type="mutagenesis site" description="Reduces nick joining activity by 99%." evidence="3">
    <original>D</original>
    <variation>N</variation>
    <location>
        <position position="285"/>
    </location>
</feature>
<feature type="mutagenesis site" description="Reduces nick joining activity by 86%." evidence="3">
    <original>G</original>
    <variation>A</variation>
    <location>
        <position position="286"/>
    </location>
</feature>
<feature type="mutagenesis site" description="Reduces nick joining activity by 25%." evidence="3">
    <original>V</original>
    <variation>A</variation>
    <location>
        <position position="288"/>
    </location>
</feature>
<feature type="mutagenesis site" description="Reduces nick joining activity by 87%." evidence="3">
    <original>K</original>
    <variation>A</variation>
    <location>
        <position position="290"/>
    </location>
</feature>
<feature type="mutagenesis site" description="Reduces nick joining activity by 99%." evidence="3">
    <original>K</original>
    <variation>Q</variation>
    <location>
        <position position="314"/>
    </location>
</feature>
<feature type="mutagenesis site" description="Reduces nick joining activity by 95%." evidence="3">
    <original>K</original>
    <variation>R</variation>
    <location>
        <position position="314"/>
    </location>
</feature>
<feature type="mutagenesis site" description="Reduces nick joining activity by over 95%. Abolishes nick joining activity; when associated with A-334." evidence="5">
    <original>R</original>
    <variation>A</variation>
    <variation>Q</variation>
    <location>
        <position position="333"/>
    </location>
</feature>
<feature type="mutagenesis site" description="Abolishes nick joining activity; when associated with A-333." evidence="5">
    <original>T</original>
    <variation>A</variation>
    <location>
        <position position="334"/>
    </location>
</feature>
<feature type="mutagenesis site" description="Reduces nick joining activity by 80%." evidence="5">
    <original>R</original>
    <variation>A</variation>
    <location>
        <position position="342"/>
    </location>
</feature>
<feature type="mutagenesis site" description="Reduces nick joining activity by over 95%." evidence="5">
    <original>R</original>
    <variation>A</variation>
    <variation>Q</variation>
    <location>
        <position position="379"/>
    </location>
</feature>
<feature type="mutagenesis site" description="Reduces nick joining activity by 95%." evidence="5">
    <original>VI</original>
    <variation>AA</variation>
    <location>
        <begin position="383"/>
        <end position="384"/>
    </location>
</feature>
<feature type="mutagenesis site" description="Reduces nick joining activity by 95%." evidence="5">
    <original>RR</original>
    <variation>AA</variation>
    <location>
        <begin position="446"/>
        <end position="447"/>
    </location>
</feature>
<feature type="mutagenesis site" description="Reduces nick joining activity by 50%." evidence="5">
    <original>G</original>
    <variation>A</variation>
    <location>
        <position position="455"/>
    </location>
</feature>
<feature type="mutagenesis site" description="Reduces nick joining activity by 95%." evidence="5">
    <original>G</original>
    <variation>D</variation>
    <variation>V</variation>
    <location>
        <position position="455"/>
    </location>
</feature>
<feature type="mutagenesis site" description="Reduces nick joining activity by over 90%." evidence="5">
    <original>R</original>
    <variation>A</variation>
    <location>
        <position position="487"/>
    </location>
</feature>
<feature type="mutagenesis site" description="Reduces nick joining activity by 95%." evidence="5">
    <original>G</original>
    <variation>D</variation>
    <variation>V</variation>
    <location>
        <position position="489"/>
    </location>
</feature>
<feature type="mutagenesis site" description="Reduces nick joining activity by 95%." evidence="5">
    <original>G</original>
    <variation>A</variation>
    <location>
        <position position="521"/>
    </location>
</feature>
<feature type="mutagenesis site" description="Loss of nick joining activity." evidence="5">
    <original>G</original>
    <variation>D</variation>
    <variation>V</variation>
    <location>
        <position position="521"/>
    </location>
</feature>
<feature type="mutagenesis site" description="Reduces nick joining activity by 95%." evidence="5">
    <original>G</original>
    <variation>D</variation>
    <variation>V</variation>
    <location>
        <position position="553"/>
    </location>
</feature>
<feature type="mutagenesis site" description="Reduces nick joining activity by 85%." evidence="5">
    <original>R</original>
    <variation>A</variation>
    <location>
        <position position="614"/>
    </location>
</feature>
<feature type="sequence conflict" description="In Ref. 1; AAA24071." evidence="6" ref="1">
    <original>A</original>
    <variation>R</variation>
    <location>
        <position position="69"/>
    </location>
</feature>
<feature type="helix" evidence="10">
    <location>
        <begin position="4"/>
        <end position="23"/>
    </location>
</feature>
<feature type="strand" evidence="9">
    <location>
        <begin position="28"/>
        <end position="30"/>
    </location>
</feature>
<feature type="helix" evidence="10">
    <location>
        <begin position="32"/>
        <end position="48"/>
    </location>
</feature>
<feature type="helix" evidence="10">
    <location>
        <begin position="50"/>
        <end position="52"/>
    </location>
</feature>
<feature type="helix" evidence="10">
    <location>
        <begin position="58"/>
        <end position="60"/>
    </location>
</feature>
<feature type="strand" evidence="10">
    <location>
        <begin position="72"/>
        <end position="74"/>
    </location>
</feature>
<feature type="strand" evidence="8">
    <location>
        <begin position="83"/>
        <end position="85"/>
    </location>
</feature>
<feature type="helix" evidence="10">
    <location>
        <begin position="88"/>
        <end position="101"/>
    </location>
</feature>
<feature type="strand" evidence="8">
    <location>
        <begin position="102"/>
        <end position="104"/>
    </location>
</feature>
<feature type="strand" evidence="10">
    <location>
        <begin position="110"/>
        <end position="126"/>
    </location>
</feature>
<feature type="strand" evidence="10">
    <location>
        <begin position="129"/>
        <end position="135"/>
    </location>
</feature>
<feature type="strand" evidence="10">
    <location>
        <begin position="139"/>
        <end position="144"/>
    </location>
</feature>
<feature type="helix" evidence="10">
    <location>
        <begin position="146"/>
        <end position="149"/>
    </location>
</feature>
<feature type="strand" evidence="10">
    <location>
        <begin position="161"/>
        <end position="163"/>
    </location>
</feature>
<feature type="strand" evidence="10">
    <location>
        <begin position="166"/>
        <end position="175"/>
    </location>
</feature>
<feature type="helix" evidence="10">
    <location>
        <begin position="178"/>
        <end position="191"/>
    </location>
</feature>
<feature type="helix" evidence="10">
    <location>
        <begin position="199"/>
        <end position="207"/>
    </location>
</feature>
<feature type="helix" evidence="10">
    <location>
        <begin position="212"/>
        <end position="216"/>
    </location>
</feature>
<feature type="strand" evidence="10">
    <location>
        <begin position="221"/>
        <end position="233"/>
    </location>
</feature>
<feature type="helix" evidence="10">
    <location>
        <begin position="239"/>
        <end position="249"/>
    </location>
</feature>
<feature type="strand" evidence="10">
    <location>
        <begin position="258"/>
        <end position="262"/>
    </location>
</feature>
<feature type="helix" evidence="10">
    <location>
        <begin position="263"/>
        <end position="276"/>
    </location>
</feature>
<feature type="helix" evidence="10">
    <location>
        <begin position="277"/>
        <end position="279"/>
    </location>
</feature>
<feature type="strand" evidence="10">
    <location>
        <begin position="280"/>
        <end position="282"/>
    </location>
</feature>
<feature type="strand" evidence="10">
    <location>
        <begin position="284"/>
        <end position="291"/>
    </location>
</feature>
<feature type="helix" evidence="10">
    <location>
        <begin position="294"/>
        <end position="300"/>
    </location>
</feature>
<feature type="strand" evidence="10">
    <location>
        <begin position="304"/>
        <end position="314"/>
    </location>
</feature>
<feature type="strand" evidence="10">
    <location>
        <begin position="318"/>
        <end position="331"/>
    </location>
</feature>
<feature type="strand" evidence="10">
    <location>
        <begin position="335"/>
        <end position="348"/>
    </location>
</feature>
<feature type="strand" evidence="10">
    <location>
        <begin position="351"/>
        <end position="357"/>
    </location>
</feature>
<feature type="helix" evidence="10">
    <location>
        <begin position="361"/>
        <end position="367"/>
    </location>
</feature>
<feature type="strand" evidence="10">
    <location>
        <begin position="374"/>
        <end position="378"/>
    </location>
</feature>
<feature type="strand" evidence="10">
    <location>
        <begin position="381"/>
        <end position="383"/>
    </location>
</feature>
<feature type="strand" evidence="10">
    <location>
        <begin position="386"/>
        <end position="390"/>
    </location>
</feature>
<feature type="helix" evidence="10">
    <location>
        <begin position="392"/>
        <end position="394"/>
    </location>
</feature>
<feature type="turn" evidence="10">
    <location>
        <begin position="409"/>
        <end position="411"/>
    </location>
</feature>
<feature type="strand" evidence="10">
    <location>
        <begin position="414"/>
        <end position="416"/>
    </location>
</feature>
<feature type="strand" evidence="10">
    <location>
        <begin position="424"/>
        <end position="427"/>
    </location>
</feature>
<feature type="turn" evidence="10">
    <location>
        <begin position="429"/>
        <end position="431"/>
    </location>
</feature>
<feature type="helix" evidence="10">
    <location>
        <begin position="433"/>
        <end position="435"/>
    </location>
</feature>
<feature type="helix" evidence="10">
    <location>
        <begin position="436"/>
        <end position="443"/>
    </location>
</feature>
<feature type="turn" evidence="10">
    <location>
        <begin position="446"/>
        <end position="449"/>
    </location>
</feature>
<feature type="helix" evidence="10">
    <location>
        <begin position="456"/>
        <end position="464"/>
    </location>
</feature>
<feature type="helix" evidence="10">
    <location>
        <begin position="471"/>
        <end position="475"/>
    </location>
</feature>
<feature type="helix" evidence="10">
    <location>
        <begin position="479"/>
        <end position="483"/>
    </location>
</feature>
<feature type="helix" evidence="10">
    <location>
        <begin position="490"/>
        <end position="503"/>
    </location>
</feature>
<feature type="helix" evidence="10">
    <location>
        <begin position="508"/>
        <end position="514"/>
    </location>
</feature>
<feature type="helix" evidence="10">
    <location>
        <begin position="522"/>
        <end position="532"/>
    </location>
</feature>
<feature type="helix" evidence="10">
    <location>
        <begin position="535"/>
        <end position="540"/>
    </location>
</feature>
<feature type="helix" evidence="10">
    <location>
        <begin position="543"/>
        <end position="547"/>
    </location>
</feature>
<feature type="helix" evidence="10">
    <location>
        <begin position="554"/>
        <end position="565"/>
    </location>
</feature>
<feature type="helix" evidence="10">
    <location>
        <begin position="567"/>
        <end position="578"/>
    </location>
</feature>
<dbReference type="EC" id="6.5.1.2"/>
<dbReference type="EMBL" id="M30255">
    <property type="protein sequence ID" value="AAA24071.1"/>
    <property type="molecule type" value="Genomic_DNA"/>
</dbReference>
<dbReference type="EMBL" id="M24278">
    <property type="protein sequence ID" value="AAA24070.1"/>
    <property type="molecule type" value="Genomic_DNA"/>
</dbReference>
<dbReference type="EMBL" id="U00096">
    <property type="protein sequence ID" value="AAC75464.1"/>
    <property type="molecule type" value="Genomic_DNA"/>
</dbReference>
<dbReference type="EMBL" id="AP009048">
    <property type="protein sequence ID" value="BAA16282.2"/>
    <property type="molecule type" value="Genomic_DNA"/>
</dbReference>
<dbReference type="EMBL" id="U74650">
    <property type="protein sequence ID" value="AAB42062.1"/>
    <property type="molecule type" value="Genomic_DNA"/>
</dbReference>
<dbReference type="PIR" id="B65015">
    <property type="entry name" value="LQECC6"/>
</dbReference>
<dbReference type="RefSeq" id="NP_416906.1">
    <property type="nucleotide sequence ID" value="NC_000913.3"/>
</dbReference>
<dbReference type="RefSeq" id="WP_000443661.1">
    <property type="nucleotide sequence ID" value="NZ_LN832404.1"/>
</dbReference>
<dbReference type="PDB" id="2OWO">
    <property type="method" value="X-ray"/>
    <property type="resolution" value="2.30 A"/>
    <property type="chains" value="A=1-671"/>
</dbReference>
<dbReference type="PDB" id="4GLX">
    <property type="method" value="X-ray"/>
    <property type="resolution" value="1.90 A"/>
    <property type="chains" value="A=1-586"/>
</dbReference>
<dbReference type="PDB" id="5TT5">
    <property type="method" value="X-ray"/>
    <property type="resolution" value="1.55 A"/>
    <property type="chains" value="A=1-671"/>
</dbReference>
<dbReference type="PDBsum" id="2OWO"/>
<dbReference type="PDBsum" id="4GLX"/>
<dbReference type="PDBsum" id="5TT5"/>
<dbReference type="SMR" id="P15042"/>
<dbReference type="BioGRID" id="4259672">
    <property type="interactions" value="156"/>
</dbReference>
<dbReference type="BioGRID" id="851225">
    <property type="interactions" value="9"/>
</dbReference>
<dbReference type="DIP" id="DIP-10098N"/>
<dbReference type="FunCoup" id="P15042">
    <property type="interactions" value="544"/>
</dbReference>
<dbReference type="IntAct" id="P15042">
    <property type="interactions" value="20"/>
</dbReference>
<dbReference type="STRING" id="511145.b2411"/>
<dbReference type="jPOST" id="P15042"/>
<dbReference type="PaxDb" id="511145-b2411"/>
<dbReference type="EnsemblBacteria" id="AAC75464">
    <property type="protein sequence ID" value="AAC75464"/>
    <property type="gene ID" value="b2411"/>
</dbReference>
<dbReference type="GeneID" id="946885"/>
<dbReference type="KEGG" id="ecj:JW2403"/>
<dbReference type="KEGG" id="eco:b2411"/>
<dbReference type="KEGG" id="ecoc:C3026_13405"/>
<dbReference type="PATRIC" id="fig|1411691.4.peg.4320"/>
<dbReference type="EchoBASE" id="EB0529"/>
<dbReference type="eggNOG" id="COG0272">
    <property type="taxonomic scope" value="Bacteria"/>
</dbReference>
<dbReference type="HOGENOM" id="CLU_007764_2_1_6"/>
<dbReference type="InParanoid" id="P15042"/>
<dbReference type="OMA" id="HDVEHEI"/>
<dbReference type="OrthoDB" id="9759736at2"/>
<dbReference type="PhylomeDB" id="P15042"/>
<dbReference type="BioCyc" id="EcoCyc:EG10534-MONOMER"/>
<dbReference type="BioCyc" id="MetaCyc:EG10534-MONOMER"/>
<dbReference type="BRENDA" id="6.5.1.2">
    <property type="organism ID" value="2026"/>
</dbReference>
<dbReference type="EvolutionaryTrace" id="P15042"/>
<dbReference type="PRO" id="PR:P15042"/>
<dbReference type="Proteomes" id="UP000000625">
    <property type="component" value="Chromosome"/>
</dbReference>
<dbReference type="GO" id="GO:0005829">
    <property type="term" value="C:cytosol"/>
    <property type="evidence" value="ECO:0000314"/>
    <property type="project" value="EcoCyc"/>
</dbReference>
<dbReference type="GO" id="GO:0003677">
    <property type="term" value="F:DNA binding"/>
    <property type="evidence" value="ECO:0000314"/>
    <property type="project" value="EcoCyc"/>
</dbReference>
<dbReference type="GO" id="GO:0003911">
    <property type="term" value="F:DNA ligase (NAD+) activity"/>
    <property type="evidence" value="ECO:0000314"/>
    <property type="project" value="EcoliWiki"/>
</dbReference>
<dbReference type="GO" id="GO:0046872">
    <property type="term" value="F:metal ion binding"/>
    <property type="evidence" value="ECO:0007669"/>
    <property type="project" value="UniProtKB-KW"/>
</dbReference>
<dbReference type="GO" id="GO:0070403">
    <property type="term" value="F:NAD+ binding"/>
    <property type="evidence" value="ECO:0000315"/>
    <property type="project" value="EcoCyc"/>
</dbReference>
<dbReference type="GO" id="GO:0006281">
    <property type="term" value="P:DNA repair"/>
    <property type="evidence" value="ECO:0007669"/>
    <property type="project" value="UniProtKB-KW"/>
</dbReference>
<dbReference type="GO" id="GO:0006260">
    <property type="term" value="P:DNA replication"/>
    <property type="evidence" value="ECO:0007669"/>
    <property type="project" value="UniProtKB-KW"/>
</dbReference>
<dbReference type="CDD" id="cd17748">
    <property type="entry name" value="BRCT_DNA_ligase_like"/>
    <property type="match status" value="1"/>
</dbReference>
<dbReference type="CDD" id="cd00114">
    <property type="entry name" value="LIGANc"/>
    <property type="match status" value="1"/>
</dbReference>
<dbReference type="FunFam" id="1.10.150.20:FF:000006">
    <property type="entry name" value="DNA ligase"/>
    <property type="match status" value="1"/>
</dbReference>
<dbReference type="FunFam" id="1.10.150.20:FF:000007">
    <property type="entry name" value="DNA ligase"/>
    <property type="match status" value="1"/>
</dbReference>
<dbReference type="FunFam" id="1.10.287.610:FF:000002">
    <property type="entry name" value="DNA ligase"/>
    <property type="match status" value="1"/>
</dbReference>
<dbReference type="FunFam" id="2.40.50.140:FF:000012">
    <property type="entry name" value="DNA ligase"/>
    <property type="match status" value="1"/>
</dbReference>
<dbReference type="FunFam" id="3.30.470.30:FF:000001">
    <property type="entry name" value="DNA ligase"/>
    <property type="match status" value="1"/>
</dbReference>
<dbReference type="FunFam" id="3.40.50.10190:FF:000004">
    <property type="entry name" value="DNA ligase"/>
    <property type="match status" value="1"/>
</dbReference>
<dbReference type="FunFam" id="6.20.10.30:FF:000001">
    <property type="entry name" value="DNA ligase"/>
    <property type="match status" value="1"/>
</dbReference>
<dbReference type="Gene3D" id="6.20.10.30">
    <property type="match status" value="1"/>
</dbReference>
<dbReference type="Gene3D" id="1.10.150.20">
    <property type="entry name" value="5' to 3' exonuclease, C-terminal subdomain"/>
    <property type="match status" value="2"/>
</dbReference>
<dbReference type="Gene3D" id="3.40.50.10190">
    <property type="entry name" value="BRCT domain"/>
    <property type="match status" value="1"/>
</dbReference>
<dbReference type="Gene3D" id="3.30.470.30">
    <property type="entry name" value="DNA ligase/mRNA capping enzyme"/>
    <property type="match status" value="1"/>
</dbReference>
<dbReference type="Gene3D" id="1.10.287.610">
    <property type="entry name" value="Helix hairpin bin"/>
    <property type="match status" value="1"/>
</dbReference>
<dbReference type="Gene3D" id="2.40.50.140">
    <property type="entry name" value="Nucleic acid-binding proteins"/>
    <property type="match status" value="1"/>
</dbReference>
<dbReference type="HAMAP" id="MF_01588">
    <property type="entry name" value="DNA_ligase_A"/>
    <property type="match status" value="1"/>
</dbReference>
<dbReference type="InterPro" id="IPR001357">
    <property type="entry name" value="BRCT_dom"/>
</dbReference>
<dbReference type="InterPro" id="IPR036420">
    <property type="entry name" value="BRCT_dom_sf"/>
</dbReference>
<dbReference type="InterPro" id="IPR041663">
    <property type="entry name" value="DisA/LigA_HHH"/>
</dbReference>
<dbReference type="InterPro" id="IPR001679">
    <property type="entry name" value="DNA_ligase"/>
</dbReference>
<dbReference type="InterPro" id="IPR018239">
    <property type="entry name" value="DNA_ligase_AS"/>
</dbReference>
<dbReference type="InterPro" id="IPR033136">
    <property type="entry name" value="DNA_ligase_CS"/>
</dbReference>
<dbReference type="InterPro" id="IPR013839">
    <property type="entry name" value="DNAligase_adenylation"/>
</dbReference>
<dbReference type="InterPro" id="IPR013840">
    <property type="entry name" value="DNAligase_N"/>
</dbReference>
<dbReference type="InterPro" id="IPR003583">
    <property type="entry name" value="Hlx-hairpin-Hlx_DNA-bd_motif"/>
</dbReference>
<dbReference type="InterPro" id="IPR012340">
    <property type="entry name" value="NA-bd_OB-fold"/>
</dbReference>
<dbReference type="InterPro" id="IPR004150">
    <property type="entry name" value="NAD_DNA_ligase_OB"/>
</dbReference>
<dbReference type="InterPro" id="IPR010994">
    <property type="entry name" value="RuvA_2-like"/>
</dbReference>
<dbReference type="InterPro" id="IPR004149">
    <property type="entry name" value="Znf_DNAligase_C4"/>
</dbReference>
<dbReference type="NCBIfam" id="TIGR00575">
    <property type="entry name" value="dnlj"/>
    <property type="match status" value="1"/>
</dbReference>
<dbReference type="NCBIfam" id="NF005932">
    <property type="entry name" value="PRK07956.1"/>
    <property type="match status" value="1"/>
</dbReference>
<dbReference type="PANTHER" id="PTHR23389">
    <property type="entry name" value="CHROMOSOME TRANSMISSION FIDELITY FACTOR 18"/>
    <property type="match status" value="1"/>
</dbReference>
<dbReference type="PANTHER" id="PTHR23389:SF9">
    <property type="entry name" value="DNA LIGASE"/>
    <property type="match status" value="1"/>
</dbReference>
<dbReference type="Pfam" id="PF00533">
    <property type="entry name" value="BRCT"/>
    <property type="match status" value="1"/>
</dbReference>
<dbReference type="Pfam" id="PF01653">
    <property type="entry name" value="DNA_ligase_aden"/>
    <property type="match status" value="1"/>
</dbReference>
<dbReference type="Pfam" id="PF03120">
    <property type="entry name" value="DNA_ligase_OB"/>
    <property type="match status" value="1"/>
</dbReference>
<dbReference type="Pfam" id="PF03119">
    <property type="entry name" value="DNA_ligase_ZBD"/>
    <property type="match status" value="1"/>
</dbReference>
<dbReference type="Pfam" id="PF12826">
    <property type="entry name" value="HHH_2"/>
    <property type="match status" value="1"/>
</dbReference>
<dbReference type="Pfam" id="PF14520">
    <property type="entry name" value="HHH_5"/>
    <property type="match status" value="1"/>
</dbReference>
<dbReference type="Pfam" id="PF22745">
    <property type="entry name" value="Nlig-Ia"/>
    <property type="match status" value="1"/>
</dbReference>
<dbReference type="PIRSF" id="PIRSF001604">
    <property type="entry name" value="LigA"/>
    <property type="match status" value="1"/>
</dbReference>
<dbReference type="SMART" id="SM00292">
    <property type="entry name" value="BRCT"/>
    <property type="match status" value="1"/>
</dbReference>
<dbReference type="SMART" id="SM00278">
    <property type="entry name" value="HhH1"/>
    <property type="match status" value="4"/>
</dbReference>
<dbReference type="SMART" id="SM00532">
    <property type="entry name" value="LIGANc"/>
    <property type="match status" value="1"/>
</dbReference>
<dbReference type="SUPFAM" id="SSF52113">
    <property type="entry name" value="BRCT domain"/>
    <property type="match status" value="1"/>
</dbReference>
<dbReference type="SUPFAM" id="SSF56091">
    <property type="entry name" value="DNA ligase/mRNA capping enzyme, catalytic domain"/>
    <property type="match status" value="1"/>
</dbReference>
<dbReference type="SUPFAM" id="SSF50249">
    <property type="entry name" value="Nucleic acid-binding proteins"/>
    <property type="match status" value="1"/>
</dbReference>
<dbReference type="SUPFAM" id="SSF47781">
    <property type="entry name" value="RuvA domain 2-like"/>
    <property type="match status" value="1"/>
</dbReference>
<dbReference type="PROSITE" id="PS50172">
    <property type="entry name" value="BRCT"/>
    <property type="match status" value="1"/>
</dbReference>
<dbReference type="PROSITE" id="PS01055">
    <property type="entry name" value="DNA_LIGASE_N1"/>
    <property type="match status" value="1"/>
</dbReference>
<dbReference type="PROSITE" id="PS01056">
    <property type="entry name" value="DNA_LIGASE_N2"/>
    <property type="match status" value="1"/>
</dbReference>
<sequence length="671" mass="73606">MESIEQQLTELRTTLRHHEYLYHVMDAPEIPDAEYDRLMRELRELETKHPELITPDSPTQRVGAAPLAAFSQIRHEVPMLSLDNVFDEESFLAFNKRVQDRLKNNEKVTWCCELKLDGLAVSILYENGVLVSAATRGDGTTGEDITSNVRTIRAIPLKLHGENIPARLEVRGEVFLPQAGFEKINEDARRTGGKVFANPRNAAAGSLRQLDPRITAKRPLTFFCYGVGVLEGGELPDTHLGRLLQFKKWGLPVSDRVTLCESAEEVLAFYHKVEEDRPTLGFDIDGVVIKVNSLAQQEQLGFVARAPRWAVAFKFPAQEQMTFVRDVEFQVGRTGAITPVARLEPVHVAGVLVSNATLHNADEIERLGLRIGDKVVIRRAGDVIPQVVNVVLSERPEDTREVVFPTHCPVCGSDVERVEGEAVARCTGGLICGAQRKESLKHFVSRRAMDVDGMGDKIIDQLVEKEYVHTPADLFKLTAGKLTGLERMGPKSAQNVVNALEKAKETTFARFLYALGIREVGEATAAGLAAYFGTLEALEAASIEELQKVPDVGIVVASHVHNFFAEESNRNVISELLAEGVHWPAPIVINAEEIDSPFAGKTVVLTGSLSQMSRDDAKARLVELGAKVAGSVSKKTDLVIAGEAAGSKLAKAQELGIEVIDEAEMLRLLGS</sequence>